<feature type="chain" id="PRO_0000120662" description="NAD kinase">
    <location>
        <begin position="1"/>
        <end position="269"/>
    </location>
</feature>
<feature type="active site" description="Proton acceptor" evidence="1">
    <location>
        <position position="45"/>
    </location>
</feature>
<feature type="binding site" evidence="1">
    <location>
        <begin position="45"/>
        <end position="46"/>
    </location>
    <ligand>
        <name>NAD(+)</name>
        <dbReference type="ChEBI" id="CHEBI:57540"/>
    </ligand>
</feature>
<feature type="binding site" evidence="1">
    <location>
        <begin position="122"/>
        <end position="123"/>
    </location>
    <ligand>
        <name>NAD(+)</name>
        <dbReference type="ChEBI" id="CHEBI:57540"/>
    </ligand>
</feature>
<feature type="binding site" evidence="1">
    <location>
        <position position="149"/>
    </location>
    <ligand>
        <name>NAD(+)</name>
        <dbReference type="ChEBI" id="CHEBI:57540"/>
    </ligand>
</feature>
<feature type="binding site" evidence="1">
    <location>
        <position position="151"/>
    </location>
    <ligand>
        <name>NAD(+)</name>
        <dbReference type="ChEBI" id="CHEBI:57540"/>
    </ligand>
</feature>
<feature type="binding site" evidence="1">
    <location>
        <position position="186"/>
    </location>
    <ligand>
        <name>NAD(+)</name>
        <dbReference type="ChEBI" id="CHEBI:57540"/>
    </ligand>
</feature>
<protein>
    <recommendedName>
        <fullName evidence="1">NAD kinase</fullName>
        <ecNumber evidence="1">2.7.1.23</ecNumber>
    </recommendedName>
    <alternativeName>
        <fullName evidence="1">ATP-dependent NAD kinase</fullName>
    </alternativeName>
</protein>
<organism>
    <name type="scientific">Staphylococcus aureus (strain MSSA476)</name>
    <dbReference type="NCBI Taxonomy" id="282459"/>
    <lineage>
        <taxon>Bacteria</taxon>
        <taxon>Bacillati</taxon>
        <taxon>Bacillota</taxon>
        <taxon>Bacilli</taxon>
        <taxon>Bacillales</taxon>
        <taxon>Staphylococcaceae</taxon>
        <taxon>Staphylococcus</taxon>
    </lineage>
</organism>
<sequence length="269" mass="30769">MRYTILTKGDSKSNALKHKMMNYMKDFRMIEDSENPEIVISVGGDGTLLQAFHQYSHMLSKVAFVGVHTGHLGFYADWLPHEVEKLIIEINNSEFQVIEYPLLEIIMRYNDNGYETRYLALNEATMKTENGSTLVVDVNLRGKHFERFRGDGLCVSTPSGSTAYNKALGGALIHPSLEAMQITEIASINNRVFRTVGSPLVLPKHHTCLISPVNHDTIRMTIDHVSIKHKNVNSIQYRVANEKVRFARFRPFPFWKRVHDSFISSDEER</sequence>
<proteinExistence type="inferred from homology"/>
<reference key="1">
    <citation type="journal article" date="2004" name="Proc. Natl. Acad. Sci. U.S.A.">
        <title>Complete genomes of two clinical Staphylococcus aureus strains: evidence for the rapid evolution of virulence and drug resistance.</title>
        <authorList>
            <person name="Holden M.T.G."/>
            <person name="Feil E.J."/>
            <person name="Lindsay J.A."/>
            <person name="Peacock S.J."/>
            <person name="Day N.P.J."/>
            <person name="Enright M.C."/>
            <person name="Foster T.J."/>
            <person name="Moore C.E."/>
            <person name="Hurst L."/>
            <person name="Atkin R."/>
            <person name="Barron A."/>
            <person name="Bason N."/>
            <person name="Bentley S.D."/>
            <person name="Chillingworth C."/>
            <person name="Chillingworth T."/>
            <person name="Churcher C."/>
            <person name="Clark L."/>
            <person name="Corton C."/>
            <person name="Cronin A."/>
            <person name="Doggett J."/>
            <person name="Dowd L."/>
            <person name="Feltwell T."/>
            <person name="Hance Z."/>
            <person name="Harris B."/>
            <person name="Hauser H."/>
            <person name="Holroyd S."/>
            <person name="Jagels K."/>
            <person name="James K.D."/>
            <person name="Lennard N."/>
            <person name="Line A."/>
            <person name="Mayes R."/>
            <person name="Moule S."/>
            <person name="Mungall K."/>
            <person name="Ormond D."/>
            <person name="Quail M.A."/>
            <person name="Rabbinowitsch E."/>
            <person name="Rutherford K.M."/>
            <person name="Sanders M."/>
            <person name="Sharp S."/>
            <person name="Simmonds M."/>
            <person name="Stevens K."/>
            <person name="Whitehead S."/>
            <person name="Barrell B.G."/>
            <person name="Spratt B.G."/>
            <person name="Parkhill J."/>
        </authorList>
    </citation>
    <scope>NUCLEOTIDE SEQUENCE [LARGE SCALE GENOMIC DNA]</scope>
    <source>
        <strain>MSSA476</strain>
    </source>
</reference>
<accession>Q6GAS0</accession>
<name>NADK_STAAS</name>
<evidence type="ECO:0000255" key="1">
    <source>
        <dbReference type="HAMAP-Rule" id="MF_00361"/>
    </source>
</evidence>
<dbReference type="EC" id="2.7.1.23" evidence="1"/>
<dbReference type="EMBL" id="BX571857">
    <property type="protein sequence ID" value="CAG42651.1"/>
    <property type="molecule type" value="Genomic_DNA"/>
</dbReference>
<dbReference type="RefSeq" id="WP_001270834.1">
    <property type="nucleotide sequence ID" value="NC_002953.3"/>
</dbReference>
<dbReference type="SMR" id="Q6GAS0"/>
<dbReference type="KEGG" id="sas:SAS0876"/>
<dbReference type="HOGENOM" id="CLU_008831_0_3_9"/>
<dbReference type="GO" id="GO:0005737">
    <property type="term" value="C:cytoplasm"/>
    <property type="evidence" value="ECO:0007669"/>
    <property type="project" value="UniProtKB-SubCell"/>
</dbReference>
<dbReference type="GO" id="GO:0005524">
    <property type="term" value="F:ATP binding"/>
    <property type="evidence" value="ECO:0007669"/>
    <property type="project" value="UniProtKB-KW"/>
</dbReference>
<dbReference type="GO" id="GO:0046872">
    <property type="term" value="F:metal ion binding"/>
    <property type="evidence" value="ECO:0007669"/>
    <property type="project" value="UniProtKB-UniRule"/>
</dbReference>
<dbReference type="GO" id="GO:0051287">
    <property type="term" value="F:NAD binding"/>
    <property type="evidence" value="ECO:0007669"/>
    <property type="project" value="UniProtKB-ARBA"/>
</dbReference>
<dbReference type="GO" id="GO:0003951">
    <property type="term" value="F:NAD+ kinase activity"/>
    <property type="evidence" value="ECO:0007669"/>
    <property type="project" value="UniProtKB-UniRule"/>
</dbReference>
<dbReference type="GO" id="GO:0019674">
    <property type="term" value="P:NAD metabolic process"/>
    <property type="evidence" value="ECO:0007669"/>
    <property type="project" value="InterPro"/>
</dbReference>
<dbReference type="GO" id="GO:0006741">
    <property type="term" value="P:NADP biosynthetic process"/>
    <property type="evidence" value="ECO:0007669"/>
    <property type="project" value="UniProtKB-UniRule"/>
</dbReference>
<dbReference type="FunFam" id="2.60.200.30:FF:000002">
    <property type="entry name" value="NAD kinase"/>
    <property type="match status" value="1"/>
</dbReference>
<dbReference type="Gene3D" id="3.40.50.10330">
    <property type="entry name" value="Probable inorganic polyphosphate/atp-NAD kinase, domain 1"/>
    <property type="match status" value="1"/>
</dbReference>
<dbReference type="Gene3D" id="2.60.200.30">
    <property type="entry name" value="Probable inorganic polyphosphate/atp-NAD kinase, domain 2"/>
    <property type="match status" value="1"/>
</dbReference>
<dbReference type="HAMAP" id="MF_00361">
    <property type="entry name" value="NAD_kinase"/>
    <property type="match status" value="1"/>
</dbReference>
<dbReference type="InterPro" id="IPR017438">
    <property type="entry name" value="ATP-NAD_kinase_N"/>
</dbReference>
<dbReference type="InterPro" id="IPR017437">
    <property type="entry name" value="ATP-NAD_kinase_PpnK-typ_C"/>
</dbReference>
<dbReference type="InterPro" id="IPR016064">
    <property type="entry name" value="NAD/diacylglycerol_kinase_sf"/>
</dbReference>
<dbReference type="InterPro" id="IPR002504">
    <property type="entry name" value="NADK"/>
</dbReference>
<dbReference type="NCBIfam" id="NF003424">
    <property type="entry name" value="PRK04885.1"/>
    <property type="match status" value="1"/>
</dbReference>
<dbReference type="PANTHER" id="PTHR20275">
    <property type="entry name" value="NAD KINASE"/>
    <property type="match status" value="1"/>
</dbReference>
<dbReference type="PANTHER" id="PTHR20275:SF0">
    <property type="entry name" value="NAD KINASE"/>
    <property type="match status" value="1"/>
</dbReference>
<dbReference type="Pfam" id="PF01513">
    <property type="entry name" value="NAD_kinase"/>
    <property type="match status" value="1"/>
</dbReference>
<dbReference type="Pfam" id="PF20143">
    <property type="entry name" value="NAD_kinase_C"/>
    <property type="match status" value="1"/>
</dbReference>
<dbReference type="SUPFAM" id="SSF111331">
    <property type="entry name" value="NAD kinase/diacylglycerol kinase-like"/>
    <property type="match status" value="1"/>
</dbReference>
<gene>
    <name evidence="1" type="primary">nadK</name>
    <name type="ordered locus">SAS0876</name>
</gene>
<comment type="function">
    <text evidence="1">Involved in the regulation of the intracellular balance of NAD and NADP, and is a key enzyme in the biosynthesis of NADP. Catalyzes specifically the phosphorylation on 2'-hydroxyl of the adenosine moiety of NAD to yield NADP.</text>
</comment>
<comment type="catalytic activity">
    <reaction evidence="1">
        <text>NAD(+) + ATP = ADP + NADP(+) + H(+)</text>
        <dbReference type="Rhea" id="RHEA:18629"/>
        <dbReference type="ChEBI" id="CHEBI:15378"/>
        <dbReference type="ChEBI" id="CHEBI:30616"/>
        <dbReference type="ChEBI" id="CHEBI:57540"/>
        <dbReference type="ChEBI" id="CHEBI:58349"/>
        <dbReference type="ChEBI" id="CHEBI:456216"/>
        <dbReference type="EC" id="2.7.1.23"/>
    </reaction>
</comment>
<comment type="cofactor">
    <cofactor evidence="1">
        <name>a divalent metal cation</name>
        <dbReference type="ChEBI" id="CHEBI:60240"/>
    </cofactor>
</comment>
<comment type="subcellular location">
    <subcellularLocation>
        <location evidence="1">Cytoplasm</location>
    </subcellularLocation>
</comment>
<comment type="similarity">
    <text evidence="1">Belongs to the NAD kinase family.</text>
</comment>
<keyword id="KW-0067">ATP-binding</keyword>
<keyword id="KW-0963">Cytoplasm</keyword>
<keyword id="KW-0418">Kinase</keyword>
<keyword id="KW-0520">NAD</keyword>
<keyword id="KW-0521">NADP</keyword>
<keyword id="KW-0547">Nucleotide-binding</keyword>
<keyword id="KW-0808">Transferase</keyword>